<proteinExistence type="evidence at protein level"/>
<accession>B4XY98</accession>
<organism>
    <name type="scientific">Streptomyces sahachiroi</name>
    <dbReference type="NCBI Taxonomy" id="285525"/>
    <lineage>
        <taxon>Bacteria</taxon>
        <taxon>Bacillati</taxon>
        <taxon>Actinomycetota</taxon>
        <taxon>Actinomycetes</taxon>
        <taxon>Kitasatosporales</taxon>
        <taxon>Streptomycetaceae</taxon>
        <taxon>Streptomyces</taxon>
    </lineage>
</organism>
<dbReference type="EC" id="2.1.1.302" evidence="2"/>
<dbReference type="EMBL" id="EU240558">
    <property type="protein sequence ID" value="ABY83144.1"/>
    <property type="molecule type" value="Genomic_DNA"/>
</dbReference>
<dbReference type="SMR" id="B4XY98"/>
<dbReference type="KEGG" id="ag:ABY83144"/>
<dbReference type="GO" id="GO:0008171">
    <property type="term" value="F:O-methyltransferase activity"/>
    <property type="evidence" value="ECO:0000314"/>
    <property type="project" value="UniProtKB"/>
</dbReference>
<dbReference type="GO" id="GO:0046983">
    <property type="term" value="F:protein dimerization activity"/>
    <property type="evidence" value="ECO:0007669"/>
    <property type="project" value="InterPro"/>
</dbReference>
<dbReference type="GO" id="GO:0017000">
    <property type="term" value="P:antibiotic biosynthetic process"/>
    <property type="evidence" value="ECO:0000314"/>
    <property type="project" value="UniProtKB"/>
</dbReference>
<dbReference type="GO" id="GO:0032259">
    <property type="term" value="P:methylation"/>
    <property type="evidence" value="ECO:0000314"/>
    <property type="project" value="UniProtKB"/>
</dbReference>
<dbReference type="CDD" id="cd02440">
    <property type="entry name" value="AdoMet_MTases"/>
    <property type="match status" value="1"/>
</dbReference>
<dbReference type="FunFam" id="3.40.50.150:FF:001199">
    <property type="entry name" value="3-hydroxy-5-methyl-1-naphthoate 3-O-methyltransferase"/>
    <property type="match status" value="1"/>
</dbReference>
<dbReference type="FunFam" id="1.10.10.10:FF:000358">
    <property type="entry name" value="Acetylserotonin O-methyltransferase"/>
    <property type="match status" value="1"/>
</dbReference>
<dbReference type="Gene3D" id="3.40.50.150">
    <property type="entry name" value="Vaccinia Virus protein VP39"/>
    <property type="match status" value="1"/>
</dbReference>
<dbReference type="Gene3D" id="1.10.10.10">
    <property type="entry name" value="Winged helix-like DNA-binding domain superfamily/Winged helix DNA-binding domain"/>
    <property type="match status" value="1"/>
</dbReference>
<dbReference type="InterPro" id="IPR016461">
    <property type="entry name" value="COMT-like"/>
</dbReference>
<dbReference type="InterPro" id="IPR001077">
    <property type="entry name" value="O_MeTrfase_dom"/>
</dbReference>
<dbReference type="InterPro" id="IPR012967">
    <property type="entry name" value="Plant_O-MeTrfase_dimerisation"/>
</dbReference>
<dbReference type="InterPro" id="IPR029063">
    <property type="entry name" value="SAM-dependent_MTases_sf"/>
</dbReference>
<dbReference type="InterPro" id="IPR036388">
    <property type="entry name" value="WH-like_DNA-bd_sf"/>
</dbReference>
<dbReference type="InterPro" id="IPR036390">
    <property type="entry name" value="WH_DNA-bd_sf"/>
</dbReference>
<dbReference type="PANTHER" id="PTHR43712:SF2">
    <property type="entry name" value="O-METHYLTRANSFERASE CICE"/>
    <property type="match status" value="1"/>
</dbReference>
<dbReference type="PANTHER" id="PTHR43712">
    <property type="entry name" value="PUTATIVE (AFU_ORTHOLOGUE AFUA_4G14580)-RELATED"/>
    <property type="match status" value="1"/>
</dbReference>
<dbReference type="Pfam" id="PF08100">
    <property type="entry name" value="Dimerisation"/>
    <property type="match status" value="1"/>
</dbReference>
<dbReference type="Pfam" id="PF00891">
    <property type="entry name" value="Methyltransf_2"/>
    <property type="match status" value="1"/>
</dbReference>
<dbReference type="PIRSF" id="PIRSF005739">
    <property type="entry name" value="O-mtase"/>
    <property type="match status" value="1"/>
</dbReference>
<dbReference type="SUPFAM" id="SSF53335">
    <property type="entry name" value="S-adenosyl-L-methionine-dependent methyltransferases"/>
    <property type="match status" value="1"/>
</dbReference>
<dbReference type="SUPFAM" id="SSF46785">
    <property type="entry name" value="Winged helix' DNA-binding domain"/>
    <property type="match status" value="1"/>
</dbReference>
<dbReference type="PROSITE" id="PS51683">
    <property type="entry name" value="SAM_OMT_II"/>
    <property type="match status" value="1"/>
</dbReference>
<feature type="chain" id="PRO_0000430812" description="3-hydroxy-5-methyl-1-naphthoate 3-O-methyltransferase">
    <location>
        <begin position="1"/>
        <end position="345"/>
    </location>
</feature>
<feature type="active site" description="Proton acceptor" evidence="1">
    <location>
        <position position="252"/>
    </location>
</feature>
<feature type="binding site" evidence="1">
    <location>
        <position position="205"/>
    </location>
    <ligand>
        <name>S-adenosyl-L-methionine</name>
        <dbReference type="ChEBI" id="CHEBI:59789"/>
    </ligand>
</feature>
<gene>
    <name evidence="3" type="primary">aziB2</name>
    <name evidence="5" type="synonym">azi5</name>
</gene>
<evidence type="ECO:0000255" key="1">
    <source>
        <dbReference type="PROSITE-ProRule" id="PRU01020"/>
    </source>
</evidence>
<evidence type="ECO:0000269" key="2">
    <source>
    </source>
</evidence>
<evidence type="ECO:0000303" key="3">
    <source>
    </source>
</evidence>
<evidence type="ECO:0000305" key="4"/>
<evidence type="ECO:0000312" key="5">
    <source>
        <dbReference type="EMBL" id="ABY83144.1"/>
    </source>
</evidence>
<keyword id="KW-0045">Antibiotic biosynthesis</keyword>
<keyword id="KW-0489">Methyltransferase</keyword>
<keyword id="KW-0949">S-adenosyl-L-methionine</keyword>
<keyword id="KW-0808">Transferase</keyword>
<reference key="1">
    <citation type="journal article" date="2008" name="Chem. Biol.">
        <title>Characterization of the azinomycin B biosynthetic gene cluster revealing a different iterative type I polyketide synthase for naphthoate biosynthesis.</title>
        <authorList>
            <person name="Zhao Q."/>
            <person name="He Q."/>
            <person name="Ding W."/>
            <person name="Tang M."/>
            <person name="Kang Q."/>
            <person name="Yu Y."/>
            <person name="Deng W."/>
            <person name="Zhang Q."/>
            <person name="Fang J."/>
            <person name="Tang G."/>
            <person name="Liu W."/>
        </authorList>
    </citation>
    <scope>NUCLEOTIDE SEQUENCE [GENOMIC DNA]</scope>
    <scope>PATHWAY</scope>
    <source>
        <strain>ATCC 33158 / NBRC 13928 / NRRL 2485</strain>
    </source>
</reference>
<reference key="2">
    <citation type="journal article" date="2010" name="Mol. Biosyst.">
        <title>Biosynthesis of 3-methoxy-5-methyl naphthoic acid and its incorporation into the antitumor antibiotic azinomycin B.</title>
        <authorList>
            <person name="Ding W."/>
            <person name="Deng W."/>
            <person name="Tang M."/>
            <person name="Zhang Q."/>
            <person name="Tang G."/>
            <person name="Bi Y."/>
            <person name="Liu W."/>
        </authorList>
    </citation>
    <scope>FUNCTION</scope>
    <scope>CATALYTIC ACTIVITY</scope>
    <scope>BIOPHYSICOCHEMICAL PROPERTIES</scope>
    <scope>ACTIVITY REGULATION</scope>
    <source>
        <strain>ATCC 33158 / NBRC 13928 / NRRL 2485</strain>
    </source>
</reference>
<protein>
    <recommendedName>
        <fullName evidence="4">3-hydroxy-5-methyl-1-naphthoate 3-O-methyltransferase</fullName>
        <ecNumber evidence="2">2.1.1.302</ecNumber>
    </recommendedName>
    <alternativeName>
        <fullName evidence="4">Azinomycin biosynthesis protein B2</fullName>
    </alternativeName>
</protein>
<name>AZIB2_STREG</name>
<sequence>MAAGSGSGTPPGTPPPTLLTDLATGLWKTQTLTAAIETGLFEALAAGDADAPETAQRLGIGKRPAEILLTACTALGLLEQRDGRYRNTAVAAHYLVPGLPDYFGGYVQMVARYTAPGWLRATEAVRTDAPTKPVPDPDRNMFEEGNRPESFWEGLFTFSTLTARQLAASVDLSGVRRIMDVGGGAGATLIELCRQHPHLSGTVVDLPHVCALAGERIAAAGMTGRIDTAAADFFADPLPSGHDAVLLSMILHDWDESQNRKILASCLDALPSGGTVLISELLVDDDKSGPVDAALMSMNMLVGTWGRNYTGAEYTDWLRDAGCSEVRTVRFASPGANGVVAGVKA</sequence>
<comment type="function">
    <text evidence="2">O-methyltransferase that mediates the formation of 3-methoxy-5-methyl-1-naphthoate from 3-hydroxy-5-methyl-1-naphthoate in the biosynthesis of the antitumor antibiotic azinomycin B.</text>
</comment>
<comment type="catalytic activity">
    <reaction evidence="2">
        <text>3-hydroxy-5-methyl-1-naphthoate + S-adenosyl-L-methionine = 3-methoxy-5-methyl-1-naphthoate + S-adenosyl-L-homocysteine + H(+)</text>
        <dbReference type="Rhea" id="RHEA:18577"/>
        <dbReference type="ChEBI" id="CHEBI:15378"/>
        <dbReference type="ChEBI" id="CHEBI:57856"/>
        <dbReference type="ChEBI" id="CHEBI:59789"/>
        <dbReference type="ChEBI" id="CHEBI:78252"/>
        <dbReference type="ChEBI" id="CHEBI:78620"/>
        <dbReference type="EC" id="2.1.1.302"/>
    </reaction>
</comment>
<comment type="activity regulation">
    <text evidence="2">Inhibited by different divalent cations, such as Mg(2+), Mn(2+), Fe(2+), Cu(2+) and Zn(2+).</text>
</comment>
<comment type="biophysicochemical properties">
    <kinetics>
        <KM evidence="2">145 uM for 3-hydroxy-5-methyl-1-naphthoate</KM>
        <KM evidence="2">61 uM for S-adenosyl-L-methionine</KM>
        <text evidence="2">kcat is 0.44 min(-1).</text>
    </kinetics>
</comment>
<comment type="pathway">
    <text evidence="3">Antibiotic biosynthesis.</text>
</comment>
<comment type="similarity">
    <text evidence="1">Belongs to the class I-like SAM-binding methyltransferase superfamily. Cation-independent O-methyltransferase family.</text>
</comment>